<proteinExistence type="inferred from homology"/>
<comment type="function">
    <text evidence="1">Catalyzes the transfer of a dimethylallyl group onto the adenine at position 37 in tRNAs that read codons beginning with uridine, leading to the formation of N6-(dimethylallyl)adenosine (i(6)A).</text>
</comment>
<comment type="catalytic activity">
    <reaction evidence="1">
        <text>adenosine(37) in tRNA + dimethylallyl diphosphate = N(6)-dimethylallyladenosine(37) in tRNA + diphosphate</text>
        <dbReference type="Rhea" id="RHEA:26482"/>
        <dbReference type="Rhea" id="RHEA-COMP:10162"/>
        <dbReference type="Rhea" id="RHEA-COMP:10375"/>
        <dbReference type="ChEBI" id="CHEBI:33019"/>
        <dbReference type="ChEBI" id="CHEBI:57623"/>
        <dbReference type="ChEBI" id="CHEBI:74411"/>
        <dbReference type="ChEBI" id="CHEBI:74415"/>
        <dbReference type="EC" id="2.5.1.75"/>
    </reaction>
</comment>
<comment type="cofactor">
    <cofactor evidence="1">
        <name>Mg(2+)</name>
        <dbReference type="ChEBI" id="CHEBI:18420"/>
    </cofactor>
</comment>
<comment type="subunit">
    <text evidence="1">Monomer.</text>
</comment>
<comment type="similarity">
    <text evidence="1">Belongs to the IPP transferase family.</text>
</comment>
<keyword id="KW-0067">ATP-binding</keyword>
<keyword id="KW-0460">Magnesium</keyword>
<keyword id="KW-0547">Nucleotide-binding</keyword>
<keyword id="KW-1185">Reference proteome</keyword>
<keyword id="KW-0808">Transferase</keyword>
<keyword id="KW-0819">tRNA processing</keyword>
<feature type="chain" id="PRO_0000377303" description="tRNA dimethylallyltransferase">
    <location>
        <begin position="1"/>
        <end position="324"/>
    </location>
</feature>
<feature type="region of interest" description="Interaction with substrate tRNA" evidence="1">
    <location>
        <begin position="43"/>
        <end position="46"/>
    </location>
</feature>
<feature type="binding site" evidence="1">
    <location>
        <begin position="18"/>
        <end position="25"/>
    </location>
    <ligand>
        <name>ATP</name>
        <dbReference type="ChEBI" id="CHEBI:30616"/>
    </ligand>
</feature>
<feature type="binding site" evidence="1">
    <location>
        <begin position="20"/>
        <end position="25"/>
    </location>
    <ligand>
        <name>substrate</name>
    </ligand>
</feature>
<feature type="site" description="Interaction with substrate tRNA" evidence="1">
    <location>
        <position position="131"/>
    </location>
</feature>
<organism>
    <name type="scientific">Salinibacter ruber (strain DSM 13855 / M31)</name>
    <dbReference type="NCBI Taxonomy" id="309807"/>
    <lineage>
        <taxon>Bacteria</taxon>
        <taxon>Pseudomonadati</taxon>
        <taxon>Rhodothermota</taxon>
        <taxon>Rhodothermia</taxon>
        <taxon>Rhodothermales</taxon>
        <taxon>Salinibacteraceae</taxon>
        <taxon>Salinibacter</taxon>
    </lineage>
</organism>
<dbReference type="EC" id="2.5.1.75" evidence="1"/>
<dbReference type="EMBL" id="CP000159">
    <property type="protein sequence ID" value="ABC43828.1"/>
    <property type="molecule type" value="Genomic_DNA"/>
</dbReference>
<dbReference type="RefSeq" id="WP_011404248.1">
    <property type="nucleotide sequence ID" value="NC_007677.1"/>
</dbReference>
<dbReference type="RefSeq" id="YP_445622.1">
    <property type="nucleotide sequence ID" value="NC_007677.1"/>
</dbReference>
<dbReference type="SMR" id="Q2S2F9"/>
<dbReference type="STRING" id="309807.SRU_1498"/>
<dbReference type="EnsemblBacteria" id="ABC43828">
    <property type="protein sequence ID" value="ABC43828"/>
    <property type="gene ID" value="SRU_1498"/>
</dbReference>
<dbReference type="KEGG" id="sru:SRU_1498"/>
<dbReference type="PATRIC" id="fig|309807.25.peg.1555"/>
<dbReference type="eggNOG" id="COG0324">
    <property type="taxonomic scope" value="Bacteria"/>
</dbReference>
<dbReference type="HOGENOM" id="CLU_032616_0_1_10"/>
<dbReference type="OrthoDB" id="9776390at2"/>
<dbReference type="Proteomes" id="UP000008674">
    <property type="component" value="Chromosome"/>
</dbReference>
<dbReference type="GO" id="GO:0005524">
    <property type="term" value="F:ATP binding"/>
    <property type="evidence" value="ECO:0007669"/>
    <property type="project" value="UniProtKB-UniRule"/>
</dbReference>
<dbReference type="GO" id="GO:0052381">
    <property type="term" value="F:tRNA dimethylallyltransferase activity"/>
    <property type="evidence" value="ECO:0007669"/>
    <property type="project" value="UniProtKB-UniRule"/>
</dbReference>
<dbReference type="GO" id="GO:0006400">
    <property type="term" value="P:tRNA modification"/>
    <property type="evidence" value="ECO:0007669"/>
    <property type="project" value="TreeGrafter"/>
</dbReference>
<dbReference type="Gene3D" id="1.10.20.140">
    <property type="match status" value="1"/>
</dbReference>
<dbReference type="Gene3D" id="3.40.50.300">
    <property type="entry name" value="P-loop containing nucleotide triphosphate hydrolases"/>
    <property type="match status" value="1"/>
</dbReference>
<dbReference type="HAMAP" id="MF_00185">
    <property type="entry name" value="IPP_trans"/>
    <property type="match status" value="1"/>
</dbReference>
<dbReference type="InterPro" id="IPR039657">
    <property type="entry name" value="Dimethylallyltransferase"/>
</dbReference>
<dbReference type="InterPro" id="IPR018022">
    <property type="entry name" value="IPT"/>
</dbReference>
<dbReference type="InterPro" id="IPR027417">
    <property type="entry name" value="P-loop_NTPase"/>
</dbReference>
<dbReference type="NCBIfam" id="TIGR00174">
    <property type="entry name" value="miaA"/>
    <property type="match status" value="1"/>
</dbReference>
<dbReference type="PANTHER" id="PTHR11088">
    <property type="entry name" value="TRNA DIMETHYLALLYLTRANSFERASE"/>
    <property type="match status" value="1"/>
</dbReference>
<dbReference type="PANTHER" id="PTHR11088:SF60">
    <property type="entry name" value="TRNA DIMETHYLALLYLTRANSFERASE"/>
    <property type="match status" value="1"/>
</dbReference>
<dbReference type="Pfam" id="PF01715">
    <property type="entry name" value="IPPT"/>
    <property type="match status" value="1"/>
</dbReference>
<dbReference type="SUPFAM" id="SSF52540">
    <property type="entry name" value="P-loop containing nucleoside triphosphate hydrolases"/>
    <property type="match status" value="1"/>
</dbReference>
<sequence>MEPLSEPDASDPILTITGPTAVGKTAVSLEAAEQLNAEIVSVDSRQVYEELTIGTAKPSPSEQRRAPHHFIGERSLHEPFSAGAYAKAANDRIRAVLERGRRPLVVGGATLYLHALQYGLADIPDVDDEVRDELNQRLESEGQDALYEELQQVDPRQAAETDPTKTQKVIRALEVYHGTGKPLSYYYENQPEPPFDYVTVVLNRDREKLYDRINQRVDRMLDAGLLDEVRDVMDIDGVQLDEPPLSTIGYREPIQHLKGDIDYDEMVRLVKRNTRRYAKRQLTWFRRYDEYHWRAAPETRAEDLIEVLKNALDPTHSAAEGSAR</sequence>
<evidence type="ECO:0000255" key="1">
    <source>
        <dbReference type="HAMAP-Rule" id="MF_00185"/>
    </source>
</evidence>
<protein>
    <recommendedName>
        <fullName evidence="1">tRNA dimethylallyltransferase</fullName>
        <ecNumber evidence="1">2.5.1.75</ecNumber>
    </recommendedName>
    <alternativeName>
        <fullName evidence="1">Dimethylallyl diphosphate:tRNA dimethylallyltransferase</fullName>
        <shortName evidence="1">DMAPP:tRNA dimethylallyltransferase</shortName>
        <shortName evidence="1">DMATase</shortName>
    </alternativeName>
    <alternativeName>
        <fullName evidence="1">Isopentenyl-diphosphate:tRNA isopentenyltransferase</fullName>
        <shortName evidence="1">IPP transferase</shortName>
        <shortName evidence="1">IPPT</shortName>
        <shortName evidence="1">IPTase</shortName>
    </alternativeName>
</protein>
<gene>
    <name evidence="1" type="primary">miaA</name>
    <name type="ordered locus">SRU_1498</name>
</gene>
<accession>Q2S2F9</accession>
<reference key="1">
    <citation type="journal article" date="2005" name="Proc. Natl. Acad. Sci. U.S.A.">
        <title>The genome of Salinibacter ruber: convergence and gene exchange among hyperhalophilic bacteria and archaea.</title>
        <authorList>
            <person name="Mongodin E.F."/>
            <person name="Nelson K.E."/>
            <person name="Daugherty S."/>
            <person name="DeBoy R.T."/>
            <person name="Wister J."/>
            <person name="Khouri H."/>
            <person name="Weidman J."/>
            <person name="Walsh D.A."/>
            <person name="Papke R.T."/>
            <person name="Sanchez Perez G."/>
            <person name="Sharma A.K."/>
            <person name="Nesbo C.L."/>
            <person name="MacLeod D."/>
            <person name="Bapteste E."/>
            <person name="Doolittle W.F."/>
            <person name="Charlebois R.L."/>
            <person name="Legault B."/>
            <person name="Rodriguez-Valera F."/>
        </authorList>
    </citation>
    <scope>NUCLEOTIDE SEQUENCE [LARGE SCALE GENOMIC DNA]</scope>
    <source>
        <strain>DSM 13855 / CECT 5946 / M31</strain>
    </source>
</reference>
<name>MIAA_SALRD</name>